<sequence length="511" mass="55643">MKKRALVSVSDKTGVVEFVKGLLEQGIEVISTGGTKKLLEENGLQVIGISEVTGFPEIMDGRVKTLHPNIHGGLLAVRDNETHVAQMNELGIEPIDFVIVNLYPFKETIAKPDVTFADAIENIDIGGPTMIRSAAKNHKFVSVIVDPVDYDVVLAELEENGEVKEETKRKLAAKVFRHTAAYDALISNYLTEQMGEESPETLTVTFEKKQDLRYGENPHQKATFYKAPFAATSSVAYAEQLHGKELSYNNINDADAALSIVKEFTEPAVVAVKHMNPCGVGVGTDIHEAYTRAYEADPVSIFGGIIAANREIDKSTAEKLHEIFLEIIIAPSFSKEALEVLQNKKNLRLLTVNIEKSTSASKKLTSVQGGLLVQEEDTLSLDESTISIPTKREPSEQEWKDLKLAWKVVKHVKSNAIVLAKDDMTIGVGAGQMNRVGSAKIAITQAGEKAQGSALASDAFFPMPDTLEEAAKAGITAIIQPGGSIRDEDSIKVADTYGIAMVFTGVRHFKH</sequence>
<gene>
    <name evidence="1" type="primary">purH</name>
    <name type="ordered locus">BCE_0327</name>
</gene>
<protein>
    <recommendedName>
        <fullName evidence="1">Bifunctional purine biosynthesis protein PurH</fullName>
    </recommendedName>
    <domain>
        <recommendedName>
            <fullName evidence="1">Phosphoribosylaminoimidazolecarboxamide formyltransferase</fullName>
            <ecNumber evidence="1">2.1.2.3</ecNumber>
        </recommendedName>
        <alternativeName>
            <fullName evidence="1">AICAR transformylase</fullName>
        </alternativeName>
    </domain>
    <domain>
        <recommendedName>
            <fullName evidence="1">IMP cyclohydrolase</fullName>
            <ecNumber evidence="1">3.5.4.10</ecNumber>
        </recommendedName>
        <alternativeName>
            <fullName evidence="1">ATIC</fullName>
        </alternativeName>
        <alternativeName>
            <fullName evidence="1">IMP synthase</fullName>
        </alternativeName>
        <alternativeName>
            <fullName evidence="1">Inosinicase</fullName>
        </alternativeName>
    </domain>
</protein>
<name>PUR9_BACC1</name>
<keyword id="KW-0378">Hydrolase</keyword>
<keyword id="KW-0511">Multifunctional enzyme</keyword>
<keyword id="KW-0658">Purine biosynthesis</keyword>
<keyword id="KW-0808">Transferase</keyword>
<feature type="chain" id="PRO_1000018839" description="Bifunctional purine biosynthesis protein PurH">
    <location>
        <begin position="1"/>
        <end position="511"/>
    </location>
</feature>
<feature type="domain" description="MGS-like" evidence="2">
    <location>
        <begin position="1"/>
        <end position="145"/>
    </location>
</feature>
<reference key="1">
    <citation type="journal article" date="2004" name="Nucleic Acids Res.">
        <title>The genome sequence of Bacillus cereus ATCC 10987 reveals metabolic adaptations and a large plasmid related to Bacillus anthracis pXO1.</title>
        <authorList>
            <person name="Rasko D.A."/>
            <person name="Ravel J."/>
            <person name="Oekstad O.A."/>
            <person name="Helgason E."/>
            <person name="Cer R.Z."/>
            <person name="Jiang L."/>
            <person name="Shores K.A."/>
            <person name="Fouts D.E."/>
            <person name="Tourasse N.J."/>
            <person name="Angiuoli S.V."/>
            <person name="Kolonay J.F."/>
            <person name="Nelson W.C."/>
            <person name="Kolstoe A.-B."/>
            <person name="Fraser C.M."/>
            <person name="Read T.D."/>
        </authorList>
    </citation>
    <scope>NUCLEOTIDE SEQUENCE [LARGE SCALE GENOMIC DNA]</scope>
    <source>
        <strain>ATCC 10987 / NRS 248</strain>
    </source>
</reference>
<evidence type="ECO:0000255" key="1">
    <source>
        <dbReference type="HAMAP-Rule" id="MF_00139"/>
    </source>
</evidence>
<evidence type="ECO:0000255" key="2">
    <source>
        <dbReference type="PROSITE-ProRule" id="PRU01202"/>
    </source>
</evidence>
<comment type="catalytic activity">
    <reaction evidence="1">
        <text>(6R)-10-formyltetrahydrofolate + 5-amino-1-(5-phospho-beta-D-ribosyl)imidazole-4-carboxamide = 5-formamido-1-(5-phospho-D-ribosyl)imidazole-4-carboxamide + (6S)-5,6,7,8-tetrahydrofolate</text>
        <dbReference type="Rhea" id="RHEA:22192"/>
        <dbReference type="ChEBI" id="CHEBI:57453"/>
        <dbReference type="ChEBI" id="CHEBI:58467"/>
        <dbReference type="ChEBI" id="CHEBI:58475"/>
        <dbReference type="ChEBI" id="CHEBI:195366"/>
        <dbReference type="EC" id="2.1.2.3"/>
    </reaction>
</comment>
<comment type="catalytic activity">
    <reaction evidence="1">
        <text>IMP + H2O = 5-formamido-1-(5-phospho-D-ribosyl)imidazole-4-carboxamide</text>
        <dbReference type="Rhea" id="RHEA:18445"/>
        <dbReference type="ChEBI" id="CHEBI:15377"/>
        <dbReference type="ChEBI" id="CHEBI:58053"/>
        <dbReference type="ChEBI" id="CHEBI:58467"/>
        <dbReference type="EC" id="3.5.4.10"/>
    </reaction>
</comment>
<comment type="pathway">
    <text evidence="1">Purine metabolism; IMP biosynthesis via de novo pathway; 5-formamido-1-(5-phospho-D-ribosyl)imidazole-4-carboxamide from 5-amino-1-(5-phospho-D-ribosyl)imidazole-4-carboxamide (10-formyl THF route): step 1/1.</text>
</comment>
<comment type="pathway">
    <text evidence="1">Purine metabolism; IMP biosynthesis via de novo pathway; IMP from 5-formamido-1-(5-phospho-D-ribosyl)imidazole-4-carboxamide: step 1/1.</text>
</comment>
<comment type="domain">
    <text evidence="1">The IMP cyclohydrolase activity resides in the N-terminal region.</text>
</comment>
<comment type="similarity">
    <text evidence="1">Belongs to the PurH family.</text>
</comment>
<organism>
    <name type="scientific">Bacillus cereus (strain ATCC 10987 / NRS 248)</name>
    <dbReference type="NCBI Taxonomy" id="222523"/>
    <lineage>
        <taxon>Bacteria</taxon>
        <taxon>Bacillati</taxon>
        <taxon>Bacillota</taxon>
        <taxon>Bacilli</taxon>
        <taxon>Bacillales</taxon>
        <taxon>Bacillaceae</taxon>
        <taxon>Bacillus</taxon>
        <taxon>Bacillus cereus group</taxon>
    </lineage>
</organism>
<accession>Q73EN1</accession>
<proteinExistence type="inferred from homology"/>
<dbReference type="EC" id="2.1.2.3" evidence="1"/>
<dbReference type="EC" id="3.5.4.10" evidence="1"/>
<dbReference type="EMBL" id="AE017194">
    <property type="protein sequence ID" value="AAS39263.1"/>
    <property type="molecule type" value="Genomic_DNA"/>
</dbReference>
<dbReference type="SMR" id="Q73EN1"/>
<dbReference type="KEGG" id="bca:BCE_0327"/>
<dbReference type="HOGENOM" id="CLU_016316_5_2_9"/>
<dbReference type="UniPathway" id="UPA00074">
    <property type="reaction ID" value="UER00133"/>
</dbReference>
<dbReference type="UniPathway" id="UPA00074">
    <property type="reaction ID" value="UER00135"/>
</dbReference>
<dbReference type="Proteomes" id="UP000002527">
    <property type="component" value="Chromosome"/>
</dbReference>
<dbReference type="GO" id="GO:0005829">
    <property type="term" value="C:cytosol"/>
    <property type="evidence" value="ECO:0007669"/>
    <property type="project" value="TreeGrafter"/>
</dbReference>
<dbReference type="GO" id="GO:0003937">
    <property type="term" value="F:IMP cyclohydrolase activity"/>
    <property type="evidence" value="ECO:0007669"/>
    <property type="project" value="UniProtKB-UniRule"/>
</dbReference>
<dbReference type="GO" id="GO:0004643">
    <property type="term" value="F:phosphoribosylaminoimidazolecarboxamide formyltransferase activity"/>
    <property type="evidence" value="ECO:0007669"/>
    <property type="project" value="UniProtKB-UniRule"/>
</dbReference>
<dbReference type="GO" id="GO:0006189">
    <property type="term" value="P:'de novo' IMP biosynthetic process"/>
    <property type="evidence" value="ECO:0007669"/>
    <property type="project" value="UniProtKB-UniRule"/>
</dbReference>
<dbReference type="CDD" id="cd01421">
    <property type="entry name" value="IMPCH"/>
    <property type="match status" value="1"/>
</dbReference>
<dbReference type="FunFam" id="3.40.140.20:FF:000001">
    <property type="entry name" value="Bifunctional purine biosynthesis protein PurH"/>
    <property type="match status" value="1"/>
</dbReference>
<dbReference type="FunFam" id="3.40.140.20:FF:000002">
    <property type="entry name" value="Bifunctional purine biosynthesis protein PurH"/>
    <property type="match status" value="1"/>
</dbReference>
<dbReference type="FunFam" id="3.40.50.1380:FF:000001">
    <property type="entry name" value="Bifunctional purine biosynthesis protein PurH"/>
    <property type="match status" value="1"/>
</dbReference>
<dbReference type="Gene3D" id="3.40.140.20">
    <property type="match status" value="2"/>
</dbReference>
<dbReference type="Gene3D" id="3.40.50.1380">
    <property type="entry name" value="Methylglyoxal synthase-like domain"/>
    <property type="match status" value="1"/>
</dbReference>
<dbReference type="HAMAP" id="MF_00139">
    <property type="entry name" value="PurH"/>
    <property type="match status" value="1"/>
</dbReference>
<dbReference type="InterPro" id="IPR024051">
    <property type="entry name" value="AICAR_Tfase_dup_dom_sf"/>
</dbReference>
<dbReference type="InterPro" id="IPR016193">
    <property type="entry name" value="Cytidine_deaminase-like"/>
</dbReference>
<dbReference type="InterPro" id="IPR011607">
    <property type="entry name" value="MGS-like_dom"/>
</dbReference>
<dbReference type="InterPro" id="IPR036914">
    <property type="entry name" value="MGS-like_dom_sf"/>
</dbReference>
<dbReference type="InterPro" id="IPR002695">
    <property type="entry name" value="PurH-like"/>
</dbReference>
<dbReference type="NCBIfam" id="NF002049">
    <property type="entry name" value="PRK00881.1"/>
    <property type="match status" value="1"/>
</dbReference>
<dbReference type="NCBIfam" id="TIGR00355">
    <property type="entry name" value="purH"/>
    <property type="match status" value="1"/>
</dbReference>
<dbReference type="PANTHER" id="PTHR11692:SF0">
    <property type="entry name" value="BIFUNCTIONAL PURINE BIOSYNTHESIS PROTEIN ATIC"/>
    <property type="match status" value="1"/>
</dbReference>
<dbReference type="PANTHER" id="PTHR11692">
    <property type="entry name" value="BIFUNCTIONAL PURINE BIOSYNTHESIS PROTEIN PURH"/>
    <property type="match status" value="1"/>
</dbReference>
<dbReference type="Pfam" id="PF01808">
    <property type="entry name" value="AICARFT_IMPCHas"/>
    <property type="match status" value="1"/>
</dbReference>
<dbReference type="Pfam" id="PF02142">
    <property type="entry name" value="MGS"/>
    <property type="match status" value="1"/>
</dbReference>
<dbReference type="PIRSF" id="PIRSF000414">
    <property type="entry name" value="AICARFT_IMPCHas"/>
    <property type="match status" value="1"/>
</dbReference>
<dbReference type="SMART" id="SM00798">
    <property type="entry name" value="AICARFT_IMPCHas"/>
    <property type="match status" value="1"/>
</dbReference>
<dbReference type="SMART" id="SM00851">
    <property type="entry name" value="MGS"/>
    <property type="match status" value="1"/>
</dbReference>
<dbReference type="SUPFAM" id="SSF53927">
    <property type="entry name" value="Cytidine deaminase-like"/>
    <property type="match status" value="1"/>
</dbReference>
<dbReference type="SUPFAM" id="SSF52335">
    <property type="entry name" value="Methylglyoxal synthase-like"/>
    <property type="match status" value="1"/>
</dbReference>
<dbReference type="PROSITE" id="PS51855">
    <property type="entry name" value="MGS"/>
    <property type="match status" value="1"/>
</dbReference>